<name>MATK_MATIN</name>
<comment type="function">
    <text evidence="1">Usually encoded in the trnK tRNA gene intron. Probably assists in splicing its own and other chloroplast group II introns.</text>
</comment>
<comment type="subcellular location">
    <subcellularLocation>
        <location>Plastid</location>
        <location>Chloroplast</location>
    </subcellularLocation>
</comment>
<comment type="similarity">
    <text evidence="1">Belongs to the intron maturase 2 family. MatK subfamily.</text>
</comment>
<evidence type="ECO:0000255" key="1">
    <source>
        <dbReference type="HAMAP-Rule" id="MF_01390"/>
    </source>
</evidence>
<sequence>MXXXXGYLEFDGAQQQSFLYPLFFREYIYVLAYDHGLNRLNRNRSIFLENADYDKRYSSLIVKRLILRMSEQNRLITSTKDFSQNPFLGHTHLFYYQMISVLFAVIVEIPFSLRLGSSFEGKKLKKSYNLQSIHSIFPFLEDKLSHFNYVLDVLIPYPIHLEILVQTLRYRVKDASSLHFFRFCLYEYCSWKNFDIKKKSIFNPRFFLFLYNSHVCEYESIFFFLRKRSSHLRSTSYEVLFERIFFYGKIQHFFKVFVNNFPAILGLLKDPFIHYVRYRGKCILATKDTPLLMNKWKYYFVNLWQCYFSIWFQPQKANINQLYKANLEFLGYMSSLRLNPLVVRSQMLENSFLIDNVRIKLDSKIPISSIIGSLAKDKFCNVLGHPISKANWTDSSDSDILNRFVRICRNISHYYSGSSKKKILYRIKYILRLCCVKTLARKHKSTVRAFLKRLGSGLLEEFLTGEDQVLSLIFPRSFYASKRFFRVRIWYLDILYLNDLVNHE</sequence>
<proteinExistence type="inferred from homology"/>
<geneLocation type="chloroplast"/>
<reference key="1">
    <citation type="submission" date="1999-04" db="EMBL/GenBank/DDBJ databases">
        <title>Evolutionary analysis of plastidic maturase K and nuclear chalcone synthase and their utility for phylogenetic reconstructions within the Brassicaceae.</title>
        <authorList>
            <person name="Koch M."/>
            <person name="Mitchell-Olds T."/>
        </authorList>
    </citation>
    <scope>NUCLEOTIDE SEQUENCE [GENOMIC DNA]</scope>
</reference>
<dbReference type="EMBL" id="AF144361">
    <property type="protein sequence ID" value="AAG43330.1"/>
    <property type="molecule type" value="Genomic_DNA"/>
</dbReference>
<dbReference type="GO" id="GO:0009507">
    <property type="term" value="C:chloroplast"/>
    <property type="evidence" value="ECO:0007669"/>
    <property type="project" value="UniProtKB-SubCell"/>
</dbReference>
<dbReference type="GO" id="GO:0003723">
    <property type="term" value="F:RNA binding"/>
    <property type="evidence" value="ECO:0007669"/>
    <property type="project" value="UniProtKB-KW"/>
</dbReference>
<dbReference type="GO" id="GO:0006397">
    <property type="term" value="P:mRNA processing"/>
    <property type="evidence" value="ECO:0007669"/>
    <property type="project" value="UniProtKB-KW"/>
</dbReference>
<dbReference type="GO" id="GO:0008380">
    <property type="term" value="P:RNA splicing"/>
    <property type="evidence" value="ECO:0007669"/>
    <property type="project" value="UniProtKB-UniRule"/>
</dbReference>
<dbReference type="GO" id="GO:0008033">
    <property type="term" value="P:tRNA processing"/>
    <property type="evidence" value="ECO:0007669"/>
    <property type="project" value="UniProtKB-KW"/>
</dbReference>
<dbReference type="HAMAP" id="MF_01390">
    <property type="entry name" value="MatK"/>
    <property type="match status" value="1"/>
</dbReference>
<dbReference type="InterPro" id="IPR024937">
    <property type="entry name" value="Domain_X"/>
</dbReference>
<dbReference type="InterPro" id="IPR002866">
    <property type="entry name" value="Maturase_MatK"/>
</dbReference>
<dbReference type="InterPro" id="IPR024942">
    <property type="entry name" value="Maturase_MatK_N"/>
</dbReference>
<dbReference type="PANTHER" id="PTHR34811">
    <property type="entry name" value="MATURASE K"/>
    <property type="match status" value="1"/>
</dbReference>
<dbReference type="PANTHER" id="PTHR34811:SF1">
    <property type="entry name" value="MATURASE K"/>
    <property type="match status" value="1"/>
</dbReference>
<dbReference type="Pfam" id="PF01348">
    <property type="entry name" value="Intron_maturas2"/>
    <property type="match status" value="1"/>
</dbReference>
<dbReference type="Pfam" id="PF01824">
    <property type="entry name" value="MatK_N"/>
    <property type="match status" value="1"/>
</dbReference>
<feature type="chain" id="PRO_0000143509" description="Maturase K">
    <location>
        <begin position="1"/>
        <end position="504"/>
    </location>
</feature>
<accession>Q9GF34</accession>
<gene>
    <name evidence="1" type="primary">matK</name>
</gene>
<protein>
    <recommendedName>
        <fullName evidence="1">Maturase K</fullName>
    </recommendedName>
    <alternativeName>
        <fullName evidence="1">Intron maturase</fullName>
    </alternativeName>
</protein>
<organism>
    <name type="scientific">Matthiola incana</name>
    <name type="common">Common stock</name>
    <name type="synonym">Cheiranthus incanus</name>
    <dbReference type="NCBI Taxonomy" id="3724"/>
    <lineage>
        <taxon>Eukaryota</taxon>
        <taxon>Viridiplantae</taxon>
        <taxon>Streptophyta</taxon>
        <taxon>Embryophyta</taxon>
        <taxon>Tracheophyta</taxon>
        <taxon>Spermatophyta</taxon>
        <taxon>Magnoliopsida</taxon>
        <taxon>eudicotyledons</taxon>
        <taxon>Gunneridae</taxon>
        <taxon>Pentapetalae</taxon>
        <taxon>rosids</taxon>
        <taxon>malvids</taxon>
        <taxon>Brassicales</taxon>
        <taxon>Brassicaceae</taxon>
        <taxon>Anchonieae</taxon>
        <taxon>Matthiola</taxon>
    </lineage>
</organism>
<keyword id="KW-0150">Chloroplast</keyword>
<keyword id="KW-0507">mRNA processing</keyword>
<keyword id="KW-0934">Plastid</keyword>
<keyword id="KW-0694">RNA-binding</keyword>
<keyword id="KW-0819">tRNA processing</keyword>